<organism>
    <name type="scientific">Actinobacillus succinogenes (strain ATCC 55618 / DSM 22257 / CCUG 43843 / 130Z)</name>
    <dbReference type="NCBI Taxonomy" id="339671"/>
    <lineage>
        <taxon>Bacteria</taxon>
        <taxon>Pseudomonadati</taxon>
        <taxon>Pseudomonadota</taxon>
        <taxon>Gammaproteobacteria</taxon>
        <taxon>Pasteurellales</taxon>
        <taxon>Pasteurellaceae</taxon>
        <taxon>Actinobacillus</taxon>
    </lineage>
</organism>
<comment type="function">
    <text evidence="1">Catalyzes the specific phosphorylation of the 3-hydroxyl group of shikimic acid using ATP as a cosubstrate.</text>
</comment>
<comment type="catalytic activity">
    <reaction evidence="1">
        <text>shikimate + ATP = 3-phosphoshikimate + ADP + H(+)</text>
        <dbReference type="Rhea" id="RHEA:13121"/>
        <dbReference type="ChEBI" id="CHEBI:15378"/>
        <dbReference type="ChEBI" id="CHEBI:30616"/>
        <dbReference type="ChEBI" id="CHEBI:36208"/>
        <dbReference type="ChEBI" id="CHEBI:145989"/>
        <dbReference type="ChEBI" id="CHEBI:456216"/>
        <dbReference type="EC" id="2.7.1.71"/>
    </reaction>
</comment>
<comment type="cofactor">
    <cofactor evidence="1">
        <name>Mg(2+)</name>
        <dbReference type="ChEBI" id="CHEBI:18420"/>
    </cofactor>
    <text evidence="1">Binds 1 Mg(2+) ion per subunit.</text>
</comment>
<comment type="pathway">
    <text evidence="1">Metabolic intermediate biosynthesis; chorismate biosynthesis; chorismate from D-erythrose 4-phosphate and phosphoenolpyruvate: step 5/7.</text>
</comment>
<comment type="subunit">
    <text evidence="1">Monomer.</text>
</comment>
<comment type="subcellular location">
    <subcellularLocation>
        <location evidence="1">Cytoplasm</location>
    </subcellularLocation>
</comment>
<comment type="similarity">
    <text evidence="1">Belongs to the shikimate kinase family.</text>
</comment>
<sequence length="175" mass="19625">MAEKRNIFLVGPMGAGKSTIGRQLAQQLGMEFFDSDSVIEERAGAEISWIFDIEGENGFRKREERIINELTQKQGIVLSTGGGVVLSKENRNHLSARGIVVYLQTTVAKQFERTQRDKKRPLLQGVEDARQVLENLAVIRNPLYEEVADITLPTDEQSAKVMANQIIDLIDNFHG</sequence>
<feature type="chain" id="PRO_1000071323" description="Shikimate kinase">
    <location>
        <begin position="1"/>
        <end position="175"/>
    </location>
</feature>
<feature type="binding site" evidence="1">
    <location>
        <begin position="14"/>
        <end position="19"/>
    </location>
    <ligand>
        <name>ATP</name>
        <dbReference type="ChEBI" id="CHEBI:30616"/>
    </ligand>
</feature>
<feature type="binding site" evidence="1">
    <location>
        <position position="18"/>
    </location>
    <ligand>
        <name>Mg(2+)</name>
        <dbReference type="ChEBI" id="CHEBI:18420"/>
    </ligand>
</feature>
<feature type="binding site" evidence="1">
    <location>
        <position position="36"/>
    </location>
    <ligand>
        <name>substrate</name>
    </ligand>
</feature>
<feature type="binding site" evidence="1">
    <location>
        <position position="60"/>
    </location>
    <ligand>
        <name>substrate</name>
    </ligand>
</feature>
<feature type="binding site" evidence="1">
    <location>
        <position position="82"/>
    </location>
    <ligand>
        <name>substrate</name>
    </ligand>
</feature>
<feature type="binding site" evidence="1">
    <location>
        <position position="120"/>
    </location>
    <ligand>
        <name>ATP</name>
        <dbReference type="ChEBI" id="CHEBI:30616"/>
    </ligand>
</feature>
<feature type="binding site" evidence="1">
    <location>
        <position position="140"/>
    </location>
    <ligand>
        <name>substrate</name>
    </ligand>
</feature>
<feature type="binding site" evidence="1">
    <location>
        <position position="157"/>
    </location>
    <ligand>
        <name>ATP</name>
        <dbReference type="ChEBI" id="CHEBI:30616"/>
    </ligand>
</feature>
<name>AROK_ACTSZ</name>
<gene>
    <name evidence="1" type="primary">aroK</name>
    <name type="ordered locus">Asuc_0264</name>
</gene>
<evidence type="ECO:0000255" key="1">
    <source>
        <dbReference type="HAMAP-Rule" id="MF_00109"/>
    </source>
</evidence>
<proteinExistence type="inferred from homology"/>
<protein>
    <recommendedName>
        <fullName evidence="1">Shikimate kinase</fullName>
        <shortName evidence="1">SK</shortName>
        <ecNumber evidence="1">2.7.1.71</ecNumber>
    </recommendedName>
</protein>
<accession>A6VKZ6</accession>
<dbReference type="EC" id="2.7.1.71" evidence="1"/>
<dbReference type="EMBL" id="CP000746">
    <property type="protein sequence ID" value="ABR73643.1"/>
    <property type="molecule type" value="Genomic_DNA"/>
</dbReference>
<dbReference type="RefSeq" id="WP_011978919.1">
    <property type="nucleotide sequence ID" value="NC_009655.1"/>
</dbReference>
<dbReference type="SMR" id="A6VKZ6"/>
<dbReference type="STRING" id="339671.Asuc_0264"/>
<dbReference type="KEGG" id="asu:Asuc_0264"/>
<dbReference type="eggNOG" id="COG0703">
    <property type="taxonomic scope" value="Bacteria"/>
</dbReference>
<dbReference type="HOGENOM" id="CLU_057607_2_2_6"/>
<dbReference type="OrthoDB" id="9800332at2"/>
<dbReference type="UniPathway" id="UPA00053">
    <property type="reaction ID" value="UER00088"/>
</dbReference>
<dbReference type="Proteomes" id="UP000001114">
    <property type="component" value="Chromosome"/>
</dbReference>
<dbReference type="GO" id="GO:0005829">
    <property type="term" value="C:cytosol"/>
    <property type="evidence" value="ECO:0007669"/>
    <property type="project" value="TreeGrafter"/>
</dbReference>
<dbReference type="GO" id="GO:0005524">
    <property type="term" value="F:ATP binding"/>
    <property type="evidence" value="ECO:0007669"/>
    <property type="project" value="UniProtKB-UniRule"/>
</dbReference>
<dbReference type="GO" id="GO:0000287">
    <property type="term" value="F:magnesium ion binding"/>
    <property type="evidence" value="ECO:0007669"/>
    <property type="project" value="UniProtKB-UniRule"/>
</dbReference>
<dbReference type="GO" id="GO:0004765">
    <property type="term" value="F:shikimate kinase activity"/>
    <property type="evidence" value="ECO:0007669"/>
    <property type="project" value="UniProtKB-UniRule"/>
</dbReference>
<dbReference type="GO" id="GO:0008652">
    <property type="term" value="P:amino acid biosynthetic process"/>
    <property type="evidence" value="ECO:0007669"/>
    <property type="project" value="UniProtKB-KW"/>
</dbReference>
<dbReference type="GO" id="GO:0009073">
    <property type="term" value="P:aromatic amino acid family biosynthetic process"/>
    <property type="evidence" value="ECO:0007669"/>
    <property type="project" value="UniProtKB-KW"/>
</dbReference>
<dbReference type="GO" id="GO:0009423">
    <property type="term" value="P:chorismate biosynthetic process"/>
    <property type="evidence" value="ECO:0007669"/>
    <property type="project" value="UniProtKB-UniRule"/>
</dbReference>
<dbReference type="CDD" id="cd00464">
    <property type="entry name" value="SK"/>
    <property type="match status" value="1"/>
</dbReference>
<dbReference type="FunFam" id="3.40.50.300:FF:000099">
    <property type="entry name" value="Shikimate kinase 1"/>
    <property type="match status" value="1"/>
</dbReference>
<dbReference type="Gene3D" id="3.40.50.300">
    <property type="entry name" value="P-loop containing nucleotide triphosphate hydrolases"/>
    <property type="match status" value="1"/>
</dbReference>
<dbReference type="HAMAP" id="MF_00109">
    <property type="entry name" value="Shikimate_kinase"/>
    <property type="match status" value="1"/>
</dbReference>
<dbReference type="InterPro" id="IPR027417">
    <property type="entry name" value="P-loop_NTPase"/>
</dbReference>
<dbReference type="InterPro" id="IPR031322">
    <property type="entry name" value="Shikimate/glucono_kinase"/>
</dbReference>
<dbReference type="InterPro" id="IPR000623">
    <property type="entry name" value="Shikimate_kinase/TSH1"/>
</dbReference>
<dbReference type="InterPro" id="IPR023000">
    <property type="entry name" value="Shikimate_kinase_CS"/>
</dbReference>
<dbReference type="NCBIfam" id="NF003456">
    <property type="entry name" value="PRK05057.1"/>
    <property type="match status" value="1"/>
</dbReference>
<dbReference type="PANTHER" id="PTHR21087">
    <property type="entry name" value="SHIKIMATE KINASE"/>
    <property type="match status" value="1"/>
</dbReference>
<dbReference type="PANTHER" id="PTHR21087:SF16">
    <property type="entry name" value="SHIKIMATE KINASE 1, CHLOROPLASTIC"/>
    <property type="match status" value="1"/>
</dbReference>
<dbReference type="Pfam" id="PF01202">
    <property type="entry name" value="SKI"/>
    <property type="match status" value="1"/>
</dbReference>
<dbReference type="PRINTS" id="PR01100">
    <property type="entry name" value="SHIKIMTKNASE"/>
</dbReference>
<dbReference type="SUPFAM" id="SSF52540">
    <property type="entry name" value="P-loop containing nucleoside triphosphate hydrolases"/>
    <property type="match status" value="1"/>
</dbReference>
<dbReference type="PROSITE" id="PS01128">
    <property type="entry name" value="SHIKIMATE_KINASE"/>
    <property type="match status" value="1"/>
</dbReference>
<reference key="1">
    <citation type="journal article" date="2010" name="BMC Genomics">
        <title>A genomic perspective on the potential of Actinobacillus succinogenes for industrial succinate production.</title>
        <authorList>
            <person name="McKinlay J.B."/>
            <person name="Laivenieks M."/>
            <person name="Schindler B.D."/>
            <person name="McKinlay A.A."/>
            <person name="Siddaramappa S."/>
            <person name="Challacombe J.F."/>
            <person name="Lowry S.R."/>
            <person name="Clum A."/>
            <person name="Lapidus A.L."/>
            <person name="Burkhart K.B."/>
            <person name="Harkins V."/>
            <person name="Vieille C."/>
        </authorList>
    </citation>
    <scope>NUCLEOTIDE SEQUENCE [LARGE SCALE GENOMIC DNA]</scope>
    <source>
        <strain>ATCC 55618 / DSM 22257 / CCUG 43843 / 130Z</strain>
    </source>
</reference>
<keyword id="KW-0028">Amino-acid biosynthesis</keyword>
<keyword id="KW-0057">Aromatic amino acid biosynthesis</keyword>
<keyword id="KW-0067">ATP-binding</keyword>
<keyword id="KW-0963">Cytoplasm</keyword>
<keyword id="KW-0418">Kinase</keyword>
<keyword id="KW-0460">Magnesium</keyword>
<keyword id="KW-0479">Metal-binding</keyword>
<keyword id="KW-0547">Nucleotide-binding</keyword>
<keyword id="KW-1185">Reference proteome</keyword>
<keyword id="KW-0808">Transferase</keyword>